<keyword id="KW-0963">Cytoplasm</keyword>
<keyword id="KW-1185">Reference proteome</keyword>
<dbReference type="EMBL" id="AE016830">
    <property type="protein sequence ID" value="AAO79944.1"/>
    <property type="molecule type" value="Genomic_DNA"/>
</dbReference>
<dbReference type="RefSeq" id="NP_813872.1">
    <property type="nucleotide sequence ID" value="NC_004668.1"/>
</dbReference>
<dbReference type="RefSeq" id="WP_002356070.1">
    <property type="nucleotide sequence ID" value="NZ_KE136524.1"/>
</dbReference>
<dbReference type="SMR" id="Q839T8"/>
<dbReference type="STRING" id="226185.EF_0064"/>
<dbReference type="EnsemblBacteria" id="AAO79944">
    <property type="protein sequence ID" value="AAO79944"/>
    <property type="gene ID" value="EF_0064"/>
</dbReference>
<dbReference type="KEGG" id="efa:EF0064"/>
<dbReference type="PATRIC" id="fig|226185.45.peg.193"/>
<dbReference type="eggNOG" id="COG4224">
    <property type="taxonomic scope" value="Bacteria"/>
</dbReference>
<dbReference type="HOGENOM" id="CLU_173137_0_2_9"/>
<dbReference type="Proteomes" id="UP000001415">
    <property type="component" value="Chromosome"/>
</dbReference>
<dbReference type="GO" id="GO:0005737">
    <property type="term" value="C:cytoplasm"/>
    <property type="evidence" value="ECO:0007669"/>
    <property type="project" value="UniProtKB-SubCell"/>
</dbReference>
<dbReference type="Gene3D" id="1.10.287.540">
    <property type="entry name" value="Helix hairpin bin"/>
    <property type="match status" value="1"/>
</dbReference>
<dbReference type="HAMAP" id="MF_01103">
    <property type="entry name" value="UPF0291"/>
    <property type="match status" value="1"/>
</dbReference>
<dbReference type="InterPro" id="IPR009242">
    <property type="entry name" value="DUF896"/>
</dbReference>
<dbReference type="PANTHER" id="PTHR37300">
    <property type="entry name" value="UPF0291 PROTEIN CBO2609/CLC_2481"/>
    <property type="match status" value="1"/>
</dbReference>
<dbReference type="PANTHER" id="PTHR37300:SF1">
    <property type="entry name" value="UPF0291 PROTEIN YNZC"/>
    <property type="match status" value="1"/>
</dbReference>
<dbReference type="Pfam" id="PF05979">
    <property type="entry name" value="DUF896"/>
    <property type="match status" value="1"/>
</dbReference>
<dbReference type="SUPFAM" id="SSF158221">
    <property type="entry name" value="YnzC-like"/>
    <property type="match status" value="1"/>
</dbReference>
<accession>Q839T8</accession>
<reference key="1">
    <citation type="journal article" date="2003" name="Science">
        <title>Role of mobile DNA in the evolution of vancomycin-resistant Enterococcus faecalis.</title>
        <authorList>
            <person name="Paulsen I.T."/>
            <person name="Banerjei L."/>
            <person name="Myers G.S.A."/>
            <person name="Nelson K.E."/>
            <person name="Seshadri R."/>
            <person name="Read T.D."/>
            <person name="Fouts D.E."/>
            <person name="Eisen J.A."/>
            <person name="Gill S.R."/>
            <person name="Heidelberg J.F."/>
            <person name="Tettelin H."/>
            <person name="Dodson R.J."/>
            <person name="Umayam L.A."/>
            <person name="Brinkac L.M."/>
            <person name="Beanan M.J."/>
            <person name="Daugherty S.C."/>
            <person name="DeBoy R.T."/>
            <person name="Durkin S.A."/>
            <person name="Kolonay J.F."/>
            <person name="Madupu R."/>
            <person name="Nelson W.C."/>
            <person name="Vamathevan J.J."/>
            <person name="Tran B."/>
            <person name="Upton J."/>
            <person name="Hansen T."/>
            <person name="Shetty J."/>
            <person name="Khouri H.M."/>
            <person name="Utterback T.R."/>
            <person name="Radune D."/>
            <person name="Ketchum K.A."/>
            <person name="Dougherty B.A."/>
            <person name="Fraser C.M."/>
        </authorList>
    </citation>
    <scope>NUCLEOTIDE SEQUENCE [LARGE SCALE GENOMIC DNA]</scope>
    <source>
        <strain>ATCC 700802 / V583</strain>
    </source>
</reference>
<evidence type="ECO:0000255" key="1">
    <source>
        <dbReference type="HAMAP-Rule" id="MF_01103"/>
    </source>
</evidence>
<evidence type="ECO:0000256" key="2">
    <source>
        <dbReference type="SAM" id="MobiDB-lite"/>
    </source>
</evidence>
<sequence>MLEVLKRINTLAQKEREQGLTSEEQALRVDLRQEYLRTIREQFNKTLMGVTIYDPTGEDVTPEKLKEEQQKYFD</sequence>
<comment type="subcellular location">
    <subcellularLocation>
        <location evidence="1">Cytoplasm</location>
    </subcellularLocation>
</comment>
<comment type="similarity">
    <text evidence="1">Belongs to the UPF0291 family.</text>
</comment>
<protein>
    <recommendedName>
        <fullName evidence="1">UPF0291 protein EF_0064</fullName>
    </recommendedName>
</protein>
<name>Y064_ENTFA</name>
<organism>
    <name type="scientific">Enterococcus faecalis (strain ATCC 700802 / V583)</name>
    <dbReference type="NCBI Taxonomy" id="226185"/>
    <lineage>
        <taxon>Bacteria</taxon>
        <taxon>Bacillati</taxon>
        <taxon>Bacillota</taxon>
        <taxon>Bacilli</taxon>
        <taxon>Lactobacillales</taxon>
        <taxon>Enterococcaceae</taxon>
        <taxon>Enterococcus</taxon>
    </lineage>
</organism>
<feature type="chain" id="PRO_0000094969" description="UPF0291 protein EF_0064">
    <location>
        <begin position="1"/>
        <end position="74"/>
    </location>
</feature>
<feature type="region of interest" description="Disordered" evidence="2">
    <location>
        <begin position="53"/>
        <end position="74"/>
    </location>
</feature>
<feature type="compositionally biased region" description="Basic and acidic residues" evidence="2">
    <location>
        <begin position="61"/>
        <end position="74"/>
    </location>
</feature>
<gene>
    <name type="ordered locus">EF_0064</name>
</gene>
<proteinExistence type="inferred from homology"/>